<evidence type="ECO:0000250" key="1"/>
<evidence type="ECO:0000255" key="2"/>
<evidence type="ECO:0000255" key="3">
    <source>
        <dbReference type="PROSITE-ProRule" id="PRU00100"/>
    </source>
</evidence>
<evidence type="ECO:0000255" key="4">
    <source>
        <dbReference type="PROSITE-ProRule" id="PRU00143"/>
    </source>
</evidence>
<evidence type="ECO:0000255" key="5">
    <source>
        <dbReference type="PROSITE-ProRule" id="PRU00192"/>
    </source>
</evidence>
<evidence type="ECO:0000255" key="6">
    <source>
        <dbReference type="PROSITE-ProRule" id="PRU00365"/>
    </source>
</evidence>
<evidence type="ECO:0000256" key="7">
    <source>
        <dbReference type="SAM" id="MobiDB-lite"/>
    </source>
</evidence>
<evidence type="ECO:0000269" key="8">
    <source>
    </source>
</evidence>
<evidence type="ECO:0000269" key="9">
    <source>
    </source>
</evidence>
<evidence type="ECO:0000269" key="10">
    <source>
    </source>
</evidence>
<evidence type="ECO:0000269" key="11">
    <source>
    </source>
</evidence>
<evidence type="ECO:0000303" key="12">
    <source>
    </source>
</evidence>
<evidence type="ECO:0000303" key="13">
    <source>
    </source>
</evidence>
<evidence type="ECO:0000305" key="14"/>
<dbReference type="EMBL" id="AB059357">
    <property type="protein sequence ID" value="BAB69494.1"/>
    <property type="status" value="ALT_INIT"/>
    <property type="molecule type" value="mRNA"/>
</dbReference>
<dbReference type="EMBL" id="AB059358">
    <property type="protein sequence ID" value="BAB69495.1"/>
    <property type="status" value="ALT_INIT"/>
    <property type="molecule type" value="mRNA"/>
</dbReference>
<dbReference type="EMBL" id="AJ748820">
    <property type="protein sequence ID" value="CAG38657.1"/>
    <property type="molecule type" value="mRNA"/>
</dbReference>
<dbReference type="EMBL" id="AK044682">
    <property type="protein sequence ID" value="BAC32031.1"/>
    <property type="status" value="ALT_FRAME"/>
    <property type="molecule type" value="mRNA"/>
</dbReference>
<dbReference type="EMBL" id="AK088771">
    <property type="protein sequence ID" value="BAC40562.1"/>
    <property type="status" value="ALT_SEQ"/>
    <property type="molecule type" value="mRNA"/>
</dbReference>
<dbReference type="EMBL" id="BC061694">
    <property type="protein sequence ID" value="AAH61694.2"/>
    <property type="status" value="ALT_INIT"/>
    <property type="molecule type" value="mRNA"/>
</dbReference>
<dbReference type="EMBL" id="BC116723">
    <property type="protein sequence ID" value="AAI16724.1"/>
    <property type="status" value="ALT_INIT"/>
    <property type="molecule type" value="mRNA"/>
</dbReference>
<dbReference type="CCDS" id="CCDS48271.1">
    <molecule id="Q6P7F1-1"/>
</dbReference>
<dbReference type="RefSeq" id="NP_001158154.1">
    <property type="nucleotide sequence ID" value="NM_001164682.1"/>
</dbReference>
<dbReference type="RefSeq" id="NP_660125.2">
    <molecule id="Q6P7F1-1"/>
    <property type="nucleotide sequence ID" value="NM_145143.3"/>
</dbReference>
<dbReference type="SMR" id="Q6P7F1"/>
<dbReference type="BioGRID" id="230597">
    <property type="interactions" value="3"/>
</dbReference>
<dbReference type="CORUM" id="Q6P7F1"/>
<dbReference type="FunCoup" id="Q6P7F1">
    <property type="interactions" value="83"/>
</dbReference>
<dbReference type="STRING" id="10090.ENSMUSP00000109914"/>
<dbReference type="iPTMnet" id="Q6P7F1"/>
<dbReference type="PhosphoSitePlus" id="Q6P7F1"/>
<dbReference type="PaxDb" id="10090-ENSMUSP00000109914"/>
<dbReference type="ProteomicsDB" id="295584">
    <molecule id="Q6P7F1-1"/>
</dbReference>
<dbReference type="ProteomicsDB" id="295585">
    <molecule id="Q6P7F1-3"/>
</dbReference>
<dbReference type="ProteomicsDB" id="295586">
    <molecule id="Q6P7F1-4"/>
</dbReference>
<dbReference type="Antibodypedia" id="34145">
    <property type="antibodies" value="58 antibodies from 14 providers"/>
</dbReference>
<dbReference type="DNASU" id="227157"/>
<dbReference type="Ensembl" id="ENSMUST00000078874.14">
    <molecule id="Q6P7F1-1"/>
    <property type="protein sequence ID" value="ENSMUSP00000077914.8"/>
    <property type="gene ID" value="ENSMUSG00000079550.10"/>
</dbReference>
<dbReference type="Ensembl" id="ENSMUST00000191200.7">
    <molecule id="Q6P7F1-3"/>
    <property type="protein sequence ID" value="ENSMUSP00000140957.2"/>
    <property type="gene ID" value="ENSMUSG00000079550.10"/>
</dbReference>
<dbReference type="GeneID" id="227157"/>
<dbReference type="KEGG" id="mmu:227157"/>
<dbReference type="UCSC" id="uc007bdh.1">
    <molecule id="Q6P7F1-3"/>
    <property type="organism name" value="mouse"/>
</dbReference>
<dbReference type="UCSC" id="uc007bdi.2">
    <molecule id="Q6P7F1-1"/>
    <property type="organism name" value="mouse"/>
</dbReference>
<dbReference type="UCSC" id="uc007bdj.1">
    <molecule id="Q6P7F1-4"/>
    <property type="organism name" value="mouse"/>
</dbReference>
<dbReference type="AGR" id="MGI:2386681"/>
<dbReference type="CTD" id="58538"/>
<dbReference type="MGI" id="MGI:2386681">
    <property type="gene designation" value="Mpp4"/>
</dbReference>
<dbReference type="VEuPathDB" id="HostDB:ENSMUSG00000079550"/>
<dbReference type="eggNOG" id="KOG0609">
    <property type="taxonomic scope" value="Eukaryota"/>
</dbReference>
<dbReference type="GeneTree" id="ENSGT00940000156444"/>
<dbReference type="HOGENOM" id="CLU_001715_5_0_1"/>
<dbReference type="InParanoid" id="Q6P7F1"/>
<dbReference type="OMA" id="PACWIRP"/>
<dbReference type="OrthoDB" id="439127at2759"/>
<dbReference type="PhylomeDB" id="Q6P7F1"/>
<dbReference type="BioGRID-ORCS" id="227157">
    <property type="hits" value="2 hits in 78 CRISPR screens"/>
</dbReference>
<dbReference type="ChiTaRS" id="Mpp4">
    <property type="organism name" value="mouse"/>
</dbReference>
<dbReference type="PRO" id="PR:Q6P7F1"/>
<dbReference type="Proteomes" id="UP000000589">
    <property type="component" value="Chromosome 1"/>
</dbReference>
<dbReference type="RNAct" id="Q6P7F1">
    <property type="molecule type" value="protein"/>
</dbReference>
<dbReference type="Bgee" id="ENSMUSG00000079550">
    <property type="expression patterns" value="Expressed in retinal neural layer and 69 other cell types or tissues"/>
</dbReference>
<dbReference type="ExpressionAtlas" id="Q6P7F1">
    <property type="expression patterns" value="baseline and differential"/>
</dbReference>
<dbReference type="GO" id="GO:0005912">
    <property type="term" value="C:adherens junction"/>
    <property type="evidence" value="ECO:0000314"/>
    <property type="project" value="UniProtKB"/>
</dbReference>
<dbReference type="GO" id="GO:0045178">
    <property type="term" value="C:basal part of cell"/>
    <property type="evidence" value="ECO:0000314"/>
    <property type="project" value="UniProtKB"/>
</dbReference>
<dbReference type="GO" id="GO:0044316">
    <property type="term" value="C:cone cell pedicle"/>
    <property type="evidence" value="ECO:0000314"/>
    <property type="project" value="UniProtKB"/>
</dbReference>
<dbReference type="GO" id="GO:0000139">
    <property type="term" value="C:Golgi membrane"/>
    <property type="evidence" value="ECO:0000314"/>
    <property type="project" value="UniProtKB"/>
</dbReference>
<dbReference type="GO" id="GO:0016328">
    <property type="term" value="C:lateral plasma membrane"/>
    <property type="evidence" value="ECO:0000314"/>
    <property type="project" value="UniProtKB"/>
</dbReference>
<dbReference type="GO" id="GO:0042734">
    <property type="term" value="C:presynaptic membrane"/>
    <property type="evidence" value="ECO:0000314"/>
    <property type="project" value="UniProtKB"/>
</dbReference>
<dbReference type="GO" id="GO:0044317">
    <property type="term" value="C:rod spherule"/>
    <property type="evidence" value="ECO:0000314"/>
    <property type="project" value="UniProtKB"/>
</dbReference>
<dbReference type="GO" id="GO:0035418">
    <property type="term" value="P:protein localization to synapse"/>
    <property type="evidence" value="ECO:0000315"/>
    <property type="project" value="MGI"/>
</dbReference>
<dbReference type="CDD" id="cd00071">
    <property type="entry name" value="GMPK"/>
    <property type="match status" value="1"/>
</dbReference>
<dbReference type="CDD" id="cd06799">
    <property type="entry name" value="PDZ_MPP3-MPP4-MPP7-like"/>
    <property type="match status" value="1"/>
</dbReference>
<dbReference type="CDD" id="cd12034">
    <property type="entry name" value="SH3_MPP4"/>
    <property type="match status" value="1"/>
</dbReference>
<dbReference type="FunFam" id="3.30.63.10:FF:000002">
    <property type="entry name" value="Guanylate kinase 1"/>
    <property type="match status" value="1"/>
</dbReference>
<dbReference type="FunFam" id="3.40.50.300:FF:001229">
    <property type="entry name" value="MAGUK p55 subfamily member 4"/>
    <property type="match status" value="1"/>
</dbReference>
<dbReference type="FunFam" id="2.30.42.10:FF:000088">
    <property type="entry name" value="MAGUK p55 subfamily member 5"/>
    <property type="match status" value="1"/>
</dbReference>
<dbReference type="Gene3D" id="2.30.42.10">
    <property type="match status" value="1"/>
</dbReference>
<dbReference type="Gene3D" id="1.10.287.650">
    <property type="entry name" value="L27 domain"/>
    <property type="match status" value="1"/>
</dbReference>
<dbReference type="Gene3D" id="3.40.50.300">
    <property type="entry name" value="P-loop containing nucleotide triphosphate hydrolases"/>
    <property type="match status" value="1"/>
</dbReference>
<dbReference type="Gene3D" id="2.30.30.40">
    <property type="entry name" value="SH3 Domains"/>
    <property type="match status" value="1"/>
</dbReference>
<dbReference type="InterPro" id="IPR008145">
    <property type="entry name" value="GK/Ca_channel_bsu"/>
</dbReference>
<dbReference type="InterPro" id="IPR008144">
    <property type="entry name" value="Guanylate_kin-like_dom"/>
</dbReference>
<dbReference type="InterPro" id="IPR020590">
    <property type="entry name" value="Guanylate_kinase_CS"/>
</dbReference>
<dbReference type="InterPro" id="IPR014775">
    <property type="entry name" value="L27_C"/>
</dbReference>
<dbReference type="InterPro" id="IPR004172">
    <property type="entry name" value="L27_dom"/>
</dbReference>
<dbReference type="InterPro" id="IPR036892">
    <property type="entry name" value="L27_dom_sf"/>
</dbReference>
<dbReference type="InterPro" id="IPR050716">
    <property type="entry name" value="MAGUK"/>
</dbReference>
<dbReference type="InterPro" id="IPR035600">
    <property type="entry name" value="MPP4_SH3"/>
</dbReference>
<dbReference type="InterPro" id="IPR027417">
    <property type="entry name" value="P-loop_NTPase"/>
</dbReference>
<dbReference type="InterPro" id="IPR001478">
    <property type="entry name" value="PDZ"/>
</dbReference>
<dbReference type="InterPro" id="IPR036034">
    <property type="entry name" value="PDZ_sf"/>
</dbReference>
<dbReference type="InterPro" id="IPR036028">
    <property type="entry name" value="SH3-like_dom_sf"/>
</dbReference>
<dbReference type="InterPro" id="IPR001452">
    <property type="entry name" value="SH3_domain"/>
</dbReference>
<dbReference type="PANTHER" id="PTHR23122">
    <property type="entry name" value="MEMBRANE-ASSOCIATED GUANYLATE KINASE MAGUK"/>
    <property type="match status" value="1"/>
</dbReference>
<dbReference type="Pfam" id="PF00625">
    <property type="entry name" value="Guanylate_kin"/>
    <property type="match status" value="1"/>
</dbReference>
<dbReference type="Pfam" id="PF02828">
    <property type="entry name" value="L27"/>
    <property type="match status" value="1"/>
</dbReference>
<dbReference type="Pfam" id="PF00595">
    <property type="entry name" value="PDZ"/>
    <property type="match status" value="1"/>
</dbReference>
<dbReference type="SMART" id="SM00072">
    <property type="entry name" value="GuKc"/>
    <property type="match status" value="1"/>
</dbReference>
<dbReference type="SMART" id="SM00569">
    <property type="entry name" value="L27"/>
    <property type="match status" value="2"/>
</dbReference>
<dbReference type="SMART" id="SM00228">
    <property type="entry name" value="PDZ"/>
    <property type="match status" value="1"/>
</dbReference>
<dbReference type="SMART" id="SM00326">
    <property type="entry name" value="SH3"/>
    <property type="match status" value="1"/>
</dbReference>
<dbReference type="SUPFAM" id="SSF101288">
    <property type="entry name" value="L27 domain"/>
    <property type="match status" value="1"/>
</dbReference>
<dbReference type="SUPFAM" id="SSF52540">
    <property type="entry name" value="P-loop containing nucleoside triphosphate hydrolases"/>
    <property type="match status" value="1"/>
</dbReference>
<dbReference type="SUPFAM" id="SSF50156">
    <property type="entry name" value="PDZ domain-like"/>
    <property type="match status" value="1"/>
</dbReference>
<dbReference type="SUPFAM" id="SSF50044">
    <property type="entry name" value="SH3-domain"/>
    <property type="match status" value="1"/>
</dbReference>
<dbReference type="PROSITE" id="PS00856">
    <property type="entry name" value="GUANYLATE_KINASE_1"/>
    <property type="match status" value="1"/>
</dbReference>
<dbReference type="PROSITE" id="PS50052">
    <property type="entry name" value="GUANYLATE_KINASE_2"/>
    <property type="match status" value="1"/>
</dbReference>
<dbReference type="PROSITE" id="PS51022">
    <property type="entry name" value="L27"/>
    <property type="match status" value="2"/>
</dbReference>
<dbReference type="PROSITE" id="PS50106">
    <property type="entry name" value="PDZ"/>
    <property type="match status" value="1"/>
</dbReference>
<dbReference type="PROSITE" id="PS50002">
    <property type="entry name" value="SH3"/>
    <property type="match status" value="1"/>
</dbReference>
<gene>
    <name type="primary">Mpp4</name>
    <name type="synonym">Dlg6</name>
</gene>
<sequence>MRQSDRGAELTNEDRALPTPPDPENGLSGILRLLLQELSLFYSRDVNGLCLLYDLLHSPWLQALLKVYDCLQRFKEKKLVPDTTHAQILACEVLELLPKASGSPEIQELRQVLQAPHCKALLSAHDTVAQKDFEPLLPPLPDNIPDSEEAMRIVCLVKNQQPLGATIKRHEITGDILVARVIHGGLVERSGLLYAGDKLVEVNGVSVEGLDPEQVIHILAMSCGTIMFKVIPVSAPPVSSQKMVYVRAMIDYWPQEDPDIPCMDAGLPFLKGDILQIVDQNDALWWQARKISDLTICAGLIPSNHLLKRKQREFWWSQPYQPHTCLKSTRALSMEEEDSMKIDEKCVEADEETFESEELAEAKDEFVGDGQKFFIAGFRRSMRLCRRKSHFSQLHASLCCSCSCYSAVGAPYEEVVRYQRQPADKHRLIVLVGPSGVGVNELRRQLIGCNPSCFQSAVPHTTRFPKSYEMDGREYHYVSRETFESLMYGHKMLEYGEYKGHLYGTSVNAVHAVLDEGKICIMDLEPQDIQSARTRDLKPYVIFIKPPNTSSMRHSRKNAKITTDYYVDMKFKDEDLQEMEELAQKMESQFGQFFDHVIVNDNLQDACGQLLSAIQKAQEELQWVPEAWVSPDTES</sequence>
<feature type="chain" id="PRO_0000094578" description="MAGUK p55 subfamily member 4">
    <location>
        <begin position="1"/>
        <end position="635"/>
    </location>
</feature>
<feature type="domain" description="L27 1" evidence="6">
    <location>
        <begin position="23"/>
        <end position="79"/>
    </location>
</feature>
<feature type="domain" description="L27 2" evidence="6">
    <location>
        <begin position="86"/>
        <end position="136"/>
    </location>
</feature>
<feature type="domain" description="PDZ" evidence="4">
    <location>
        <begin position="153"/>
        <end position="234"/>
    </location>
</feature>
<feature type="domain" description="SH3" evidence="5">
    <location>
        <begin position="241"/>
        <end position="311"/>
    </location>
</feature>
<feature type="domain" description="Guanylate kinase-like" evidence="3">
    <location>
        <begin position="426"/>
        <end position="615"/>
    </location>
</feature>
<feature type="region of interest" description="Disordered" evidence="7">
    <location>
        <begin position="1"/>
        <end position="23"/>
    </location>
</feature>
<feature type="coiled-coil region" evidence="2">
    <location>
        <begin position="567"/>
        <end position="622"/>
    </location>
</feature>
<feature type="compositionally biased region" description="Basic and acidic residues" evidence="7">
    <location>
        <begin position="1"/>
        <end position="16"/>
    </location>
</feature>
<feature type="splice variant" id="VSP_013994" description="In isoform 4." evidence="13">
    <location>
        <begin position="1"/>
        <end position="150"/>
    </location>
</feature>
<feature type="splice variant" id="VSP_013995" description="In isoform 3 and isoform 4." evidence="12 13">
    <location>
        <begin position="331"/>
        <end position="336"/>
    </location>
</feature>
<feature type="splice variant" id="VSP_013996" description="In isoform 4." evidence="13">
    <original>DEETF</original>
    <variation>GNSSS</variation>
    <location>
        <begin position="350"/>
        <end position="354"/>
    </location>
</feature>
<feature type="splice variant" id="VSP_013997" description="In isoform 4." evidence="13">
    <location>
        <begin position="355"/>
        <end position="635"/>
    </location>
</feature>
<feature type="sequence conflict" description="In Ref. 1; BAB69494/BAB69495." evidence="14" ref="1">
    <original>R</original>
    <variation>I</variation>
    <location>
        <position position="2"/>
    </location>
</feature>
<feature type="sequence conflict" description="In Ref. 1; BAB69494/BAB69495." evidence="14" ref="1">
    <original>Q</original>
    <variation>K</variation>
    <location>
        <position position="114"/>
    </location>
</feature>
<feature type="sequence conflict" description="In Ref. 1; BAB69494/BAB69495." evidence="14" ref="1">
    <original>H</original>
    <variation>N</variation>
    <location>
        <position position="117"/>
    </location>
</feature>
<feature type="sequence conflict" description="In Ref. 3; BAC32031/BAC40562 and 4; AAI16724." evidence="14" ref="3 4">
    <original>T</original>
    <variation>M</variation>
    <location>
        <position position="225"/>
    </location>
</feature>
<feature type="sequence conflict" description="In Ref. 1; BAB69494/BAB69495." evidence="14" ref="1">
    <original>V</original>
    <variation>G</variation>
    <location>
        <position position="244"/>
    </location>
</feature>
<feature type="sequence conflict" description="In Ref. 3; BAC32031." evidence="14" ref="3">
    <original>P</original>
    <variation>H</variation>
    <location>
        <position position="258"/>
    </location>
</feature>
<feature type="sequence conflict" description="In Ref. 3; BAC40562." evidence="14" ref="3">
    <original>G</original>
    <variation>A</variation>
    <location>
        <position position="272"/>
    </location>
</feature>
<feature type="sequence conflict" description="In Ref. 1; BAB69494/BAB69495, 3; BAC32031 and 4; AAI16724." evidence="14" ref="1 3 4">
    <original>F</original>
    <variation>S</variation>
    <location>
        <position position="464"/>
    </location>
</feature>
<feature type="sequence conflict" description="In Ref. 1; BAB69494/BAB69495, 3; BAC32031 and 4; AAI16724." evidence="14" ref="1 3 4">
    <original>S</original>
    <variation>L</variation>
    <location>
        <position position="531"/>
    </location>
</feature>
<feature type="sequence conflict" description="In Ref. 1; BAB69494/BAB69495." evidence="14" ref="1">
    <original>Y</original>
    <variation>C</variation>
    <location>
        <position position="540"/>
    </location>
</feature>
<feature type="sequence conflict" description="In Ref. 1; BAB69494/BAB69495." evidence="14" ref="1">
    <original>K</original>
    <variation>R</variation>
    <location>
        <position position="616"/>
    </location>
</feature>
<proteinExistence type="evidence at protein level"/>
<name>MPP4_MOUSE</name>
<accession>Q6P7F1</accession>
<accession>Q0VG45</accession>
<accession>Q8BTT3</accession>
<accession>Q8BXM5</accession>
<accession>Q920P7</accession>
<accession>Q920P8</accession>
<organism>
    <name type="scientific">Mus musculus</name>
    <name type="common">Mouse</name>
    <dbReference type="NCBI Taxonomy" id="10090"/>
    <lineage>
        <taxon>Eukaryota</taxon>
        <taxon>Metazoa</taxon>
        <taxon>Chordata</taxon>
        <taxon>Craniata</taxon>
        <taxon>Vertebrata</taxon>
        <taxon>Euteleostomi</taxon>
        <taxon>Mammalia</taxon>
        <taxon>Eutheria</taxon>
        <taxon>Euarchontoglires</taxon>
        <taxon>Glires</taxon>
        <taxon>Rodentia</taxon>
        <taxon>Myomorpha</taxon>
        <taxon>Muroidea</taxon>
        <taxon>Muridae</taxon>
        <taxon>Murinae</taxon>
        <taxon>Mus</taxon>
        <taxon>Mus</taxon>
    </lineage>
</organism>
<protein>
    <recommendedName>
        <fullName>MAGUK p55 subfamily member 4</fullName>
    </recommendedName>
    <alternativeName>
        <fullName>Discs large homolog 6</fullName>
        <shortName>mDLG6</shortName>
    </alternativeName>
</protein>
<reference key="1">
    <citation type="journal article" date="2002" name="Cell Biol. Int.">
        <title>Spatial distribution of mDLG6 mRNA in embryonic and adult mouse brain.</title>
        <authorList>
            <person name="Inagaki H."/>
            <person name="Tanaka K."/>
            <person name="Takada M."/>
            <person name="Maeda S."/>
            <person name="Ichihara S."/>
            <person name="Saito T."/>
        </authorList>
    </citation>
    <scope>NUCLEOTIDE SEQUENCE [MRNA] (ISOFORMS 1 AND 3)</scope>
    <scope>TISSUE SPECIFICITY</scope>
    <scope>DEVELOPMENTAL STAGE</scope>
    <source>
        <tissue>Brain</tissue>
    </source>
</reference>
<reference key="2">
    <citation type="journal article" date="2005" name="Invest. Ophthalmol. Vis. Sci.">
        <title>MPP5 recruits MPP4 to the CRB1 complex in photoreceptors.</title>
        <authorList>
            <person name="Kantardzhieva A."/>
            <person name="Gosens I."/>
            <person name="Alexeeva S."/>
            <person name="Punte I.M."/>
            <person name="Versteeg I."/>
            <person name="Krieger E."/>
            <person name="Neefjes-Mol C.A."/>
            <person name="den Hollander A.I."/>
            <person name="Letteboer S.J.F."/>
            <person name="Klooster J."/>
            <person name="Cremers F.P.M."/>
            <person name="Roepman R."/>
            <person name="Wijnholds J."/>
        </authorList>
    </citation>
    <scope>NUCLEOTIDE SEQUENCE [MRNA] (ISOFORM 1)</scope>
    <source>
        <strain>C57BL/6 X DBA/2</strain>
        <tissue>Eye</tissue>
    </source>
</reference>
<reference key="3">
    <citation type="journal article" date="2005" name="Science">
        <title>The transcriptional landscape of the mammalian genome.</title>
        <authorList>
            <person name="Carninci P."/>
            <person name="Kasukawa T."/>
            <person name="Katayama S."/>
            <person name="Gough J."/>
            <person name="Frith M.C."/>
            <person name="Maeda N."/>
            <person name="Oyama R."/>
            <person name="Ravasi T."/>
            <person name="Lenhard B."/>
            <person name="Wells C."/>
            <person name="Kodzius R."/>
            <person name="Shimokawa K."/>
            <person name="Bajic V.B."/>
            <person name="Brenner S.E."/>
            <person name="Batalov S."/>
            <person name="Forrest A.R."/>
            <person name="Zavolan M."/>
            <person name="Davis M.J."/>
            <person name="Wilming L.G."/>
            <person name="Aidinis V."/>
            <person name="Allen J.E."/>
            <person name="Ambesi-Impiombato A."/>
            <person name="Apweiler R."/>
            <person name="Aturaliya R.N."/>
            <person name="Bailey T.L."/>
            <person name="Bansal M."/>
            <person name="Baxter L."/>
            <person name="Beisel K.W."/>
            <person name="Bersano T."/>
            <person name="Bono H."/>
            <person name="Chalk A.M."/>
            <person name="Chiu K.P."/>
            <person name="Choudhary V."/>
            <person name="Christoffels A."/>
            <person name="Clutterbuck D.R."/>
            <person name="Crowe M.L."/>
            <person name="Dalla E."/>
            <person name="Dalrymple B.P."/>
            <person name="de Bono B."/>
            <person name="Della Gatta G."/>
            <person name="di Bernardo D."/>
            <person name="Down T."/>
            <person name="Engstrom P."/>
            <person name="Fagiolini M."/>
            <person name="Faulkner G."/>
            <person name="Fletcher C.F."/>
            <person name="Fukushima T."/>
            <person name="Furuno M."/>
            <person name="Futaki S."/>
            <person name="Gariboldi M."/>
            <person name="Georgii-Hemming P."/>
            <person name="Gingeras T.R."/>
            <person name="Gojobori T."/>
            <person name="Green R.E."/>
            <person name="Gustincich S."/>
            <person name="Harbers M."/>
            <person name="Hayashi Y."/>
            <person name="Hensch T.K."/>
            <person name="Hirokawa N."/>
            <person name="Hill D."/>
            <person name="Huminiecki L."/>
            <person name="Iacono M."/>
            <person name="Ikeo K."/>
            <person name="Iwama A."/>
            <person name="Ishikawa T."/>
            <person name="Jakt M."/>
            <person name="Kanapin A."/>
            <person name="Katoh M."/>
            <person name="Kawasawa Y."/>
            <person name="Kelso J."/>
            <person name="Kitamura H."/>
            <person name="Kitano H."/>
            <person name="Kollias G."/>
            <person name="Krishnan S.P."/>
            <person name="Kruger A."/>
            <person name="Kummerfeld S.K."/>
            <person name="Kurochkin I.V."/>
            <person name="Lareau L.F."/>
            <person name="Lazarevic D."/>
            <person name="Lipovich L."/>
            <person name="Liu J."/>
            <person name="Liuni S."/>
            <person name="McWilliam S."/>
            <person name="Madan Babu M."/>
            <person name="Madera M."/>
            <person name="Marchionni L."/>
            <person name="Matsuda H."/>
            <person name="Matsuzawa S."/>
            <person name="Miki H."/>
            <person name="Mignone F."/>
            <person name="Miyake S."/>
            <person name="Morris K."/>
            <person name="Mottagui-Tabar S."/>
            <person name="Mulder N."/>
            <person name="Nakano N."/>
            <person name="Nakauchi H."/>
            <person name="Ng P."/>
            <person name="Nilsson R."/>
            <person name="Nishiguchi S."/>
            <person name="Nishikawa S."/>
            <person name="Nori F."/>
            <person name="Ohara O."/>
            <person name="Okazaki Y."/>
            <person name="Orlando V."/>
            <person name="Pang K.C."/>
            <person name="Pavan W.J."/>
            <person name="Pavesi G."/>
            <person name="Pesole G."/>
            <person name="Petrovsky N."/>
            <person name="Piazza S."/>
            <person name="Reed J."/>
            <person name="Reid J.F."/>
            <person name="Ring B.Z."/>
            <person name="Ringwald M."/>
            <person name="Rost B."/>
            <person name="Ruan Y."/>
            <person name="Salzberg S.L."/>
            <person name="Sandelin A."/>
            <person name="Schneider C."/>
            <person name="Schoenbach C."/>
            <person name="Sekiguchi K."/>
            <person name="Semple C.A."/>
            <person name="Seno S."/>
            <person name="Sessa L."/>
            <person name="Sheng Y."/>
            <person name="Shibata Y."/>
            <person name="Shimada H."/>
            <person name="Shimada K."/>
            <person name="Silva D."/>
            <person name="Sinclair B."/>
            <person name="Sperling S."/>
            <person name="Stupka E."/>
            <person name="Sugiura K."/>
            <person name="Sultana R."/>
            <person name="Takenaka Y."/>
            <person name="Taki K."/>
            <person name="Tammoja K."/>
            <person name="Tan S.L."/>
            <person name="Tang S."/>
            <person name="Taylor M.S."/>
            <person name="Tegner J."/>
            <person name="Teichmann S.A."/>
            <person name="Ueda H.R."/>
            <person name="van Nimwegen E."/>
            <person name="Verardo R."/>
            <person name="Wei C.L."/>
            <person name="Yagi K."/>
            <person name="Yamanishi H."/>
            <person name="Zabarovsky E."/>
            <person name="Zhu S."/>
            <person name="Zimmer A."/>
            <person name="Hide W."/>
            <person name="Bult C."/>
            <person name="Grimmond S.M."/>
            <person name="Teasdale R.D."/>
            <person name="Liu E.T."/>
            <person name="Brusic V."/>
            <person name="Quackenbush J."/>
            <person name="Wahlestedt C."/>
            <person name="Mattick J.S."/>
            <person name="Hume D.A."/>
            <person name="Kai C."/>
            <person name="Sasaki D."/>
            <person name="Tomaru Y."/>
            <person name="Fukuda S."/>
            <person name="Kanamori-Katayama M."/>
            <person name="Suzuki M."/>
            <person name="Aoki J."/>
            <person name="Arakawa T."/>
            <person name="Iida J."/>
            <person name="Imamura K."/>
            <person name="Itoh M."/>
            <person name="Kato T."/>
            <person name="Kawaji H."/>
            <person name="Kawagashira N."/>
            <person name="Kawashima T."/>
            <person name="Kojima M."/>
            <person name="Kondo S."/>
            <person name="Konno H."/>
            <person name="Nakano K."/>
            <person name="Ninomiya N."/>
            <person name="Nishio T."/>
            <person name="Okada M."/>
            <person name="Plessy C."/>
            <person name="Shibata K."/>
            <person name="Shiraki T."/>
            <person name="Suzuki S."/>
            <person name="Tagami M."/>
            <person name="Waki K."/>
            <person name="Watahiki A."/>
            <person name="Okamura-Oho Y."/>
            <person name="Suzuki H."/>
            <person name="Kawai J."/>
            <person name="Hayashizaki Y."/>
        </authorList>
    </citation>
    <scope>NUCLEOTIDE SEQUENCE [LARGE SCALE MRNA] (ISOFORM 4)</scope>
    <source>
        <strain>C57BL/6J</strain>
        <strain>NOD</strain>
        <tissue>Retina</tissue>
        <tissue>Thymus</tissue>
    </source>
</reference>
<reference key="4">
    <citation type="journal article" date="2004" name="Genome Res.">
        <title>The status, quality, and expansion of the NIH full-length cDNA project: the Mammalian Gene Collection (MGC).</title>
        <authorList>
            <consortium name="The MGC Project Team"/>
        </authorList>
    </citation>
    <scope>NUCLEOTIDE SEQUENCE [LARGE SCALE MRNA] (ISOFORM 1)</scope>
    <source>
        <strain>C57BL/6J</strain>
        <tissue>Retina</tissue>
    </source>
</reference>
<reference key="5">
    <citation type="journal article" date="2002" name="Gene">
        <title>Characterization of MPP4, a gene highly expressed in photoreceptor cells, and mutation analysis in retinitis pigmentosa.</title>
        <authorList>
            <person name="Conte I."/>
            <person name="Lestingi M."/>
            <person name="den Hollander A."/>
            <person name="Miano M.G."/>
            <person name="Alfano G."/>
            <person name="Circolo D."/>
            <person name="Pugliese M."/>
            <person name="Testa F."/>
            <person name="Simonelli F."/>
            <person name="Rinaldi E."/>
            <person name="Baiget M."/>
            <person name="Banfi S."/>
            <person name="Ciccodicola A."/>
        </authorList>
    </citation>
    <scope>TISSUE SPECIFICITY</scope>
    <scope>DEVELOPMENTAL STAGE</scope>
</reference>
<reference key="6">
    <citation type="journal article" date="2003" name="Biochem. Biophys. Res. Commun.">
        <title>Developmental and tissue expression patterns of mouse Mpp4 gene.</title>
        <authorList>
            <person name="Li M."/>
            <person name="Zhang S.S.-M."/>
            <person name="Barnstable C.J."/>
        </authorList>
    </citation>
    <scope>TISSUE SPECIFICITY</scope>
    <scope>SUBCELLULAR LOCATION</scope>
    <scope>DEVELOPMENTAL STAGE</scope>
    <scope>FUNCTION</scope>
</reference>
<reference key="7">
    <citation type="journal article" date="2004" name="J. Cell Sci.">
        <title>Crumbs homologue 1 is required for maintenance of photoreceptor cell polarization and adhesion during light exposure.</title>
        <authorList>
            <person name="van de Pavert S.A."/>
            <person name="Kantardzhieva A."/>
            <person name="Malysheva A."/>
            <person name="Meuleman J."/>
            <person name="Versteeg I."/>
            <person name="Levelt C."/>
            <person name="Klooster J."/>
            <person name="Geiger S."/>
            <person name="Seeliger M.W."/>
            <person name="Rashbass P."/>
            <person name="Le Bivic A."/>
            <person name="Wijnholds J."/>
        </authorList>
    </citation>
    <scope>INTERACTION WITH MPDZ</scope>
</reference>
<reference key="8">
    <citation type="journal article" date="2005" name="J. Comp. Neurol.">
        <title>Membrane-associated guanylate kinase proteins MPP4 and MPP5 associate with Veli3 at distinct intercellular junctions of the neurosensory retina.</title>
        <authorList>
            <person name="Stoehr H."/>
            <person name="Molday L.L."/>
            <person name="Molday R.S."/>
            <person name="Weber B.H.F."/>
            <person name="Biedermann B."/>
            <person name="Reichenbach A."/>
            <person name="Kraemer F."/>
        </authorList>
    </citation>
    <scope>SUBCELLULAR LOCATION</scope>
    <scope>TISSUE SPECIFICITY</scope>
</reference>
<comment type="function">
    <text evidence="10">May play a role in retinal photoreceptors development.</text>
</comment>
<comment type="subunit">
    <text evidence="1">May interact with GRIA2 (By similarity). Interacts with MPDZ. Forms a complex with CRB1 and PALS1. Interacts with FASLG (By similarity).</text>
</comment>
<comment type="subcellular location">
    <subcellularLocation>
        <location evidence="10 11">Cytoplasm</location>
    </subcellularLocation>
    <text>Localized at photoreceptor synaptic terminals in retina. Localized in rod and cone photoreceptors at the plasma membrane and at membranes of intracellular vesicles around the subapical region (SAR) and adherens junction, and in the outer plexiform layer (OPL).</text>
</comment>
<comment type="alternative products">
    <event type="alternative splicing"/>
    <isoform>
        <id>Q6P7F1-1</id>
        <name>1</name>
        <name>mDLG6A</name>
        <sequence type="displayed"/>
    </isoform>
    <isoform>
        <id>Q6P7F1-3</id>
        <name>3</name>
        <name>mDLG6B</name>
        <sequence type="described" ref="VSP_013995"/>
    </isoform>
    <isoform>
        <id>Q6P7F1-4</id>
        <name>4</name>
        <sequence type="described" ref="VSP_013994 VSP_013995 VSP_013996 VSP_013997"/>
    </isoform>
</comment>
<comment type="tissue specificity">
    <text evidence="8 9 10 11">Detected in the retina (at protein level). Highly enriched in the retina where it is mainly expressed by rod photoreceptors; detected in the inner segment of the photoreceptor layer and in the outer nuclear layer. Also detected at much lower levels in pineal gland, cerebellum, cortex, hippocampus, olfactory bulb, heart, liver and spleen. Expressed in the CA1-CA3 regions of pyramidal cell layers and in the granule cell layer of dentate gyrus in the hippocampus. In the cerebellum, expressed in Purkinje cells and throughout the granule cell layer. In the olfactory bulb, expressed in mitral cells.</text>
</comment>
<comment type="developmental stage">
    <text evidence="8 9 10">Expressed postnatally in the retina. The expression in the retina coincides with one of the photoreceptor specific genes. Expressed in forebrain of 9.5 dpc embryos and in whole brain of 11.5 dpc embryos.</text>
</comment>
<comment type="similarity">
    <text evidence="14">Belongs to the MAGUK family.</text>
</comment>
<comment type="sequence caution" evidence="14">
    <conflict type="erroneous initiation">
        <sequence resource="EMBL-CDS" id="AAH61694"/>
    </conflict>
</comment>
<comment type="sequence caution" evidence="14">
    <conflict type="erroneous initiation">
        <sequence resource="EMBL-CDS" id="AAI16724"/>
    </conflict>
</comment>
<comment type="sequence caution" evidence="14">
    <conflict type="erroneous initiation">
        <sequence resource="EMBL-CDS" id="BAB69494"/>
    </conflict>
</comment>
<comment type="sequence caution" evidence="14">
    <conflict type="erroneous initiation">
        <sequence resource="EMBL-CDS" id="BAB69495"/>
    </conflict>
</comment>
<comment type="sequence caution" evidence="14">
    <conflict type="frameshift">
        <sequence resource="EMBL-CDS" id="BAC32031"/>
    </conflict>
</comment>
<comment type="sequence caution" evidence="14">
    <conflict type="frameshift">
        <sequence resource="EMBL-CDS" id="BAC40562"/>
    </conflict>
</comment>
<comment type="sequence caution" evidence="14">
    <conflict type="miscellaneous discrepancy">
        <sequence resource="EMBL-CDS" id="BAC40562"/>
    </conflict>
    <text>Frameshifts and sequencing errors.</text>
</comment>
<keyword id="KW-0025">Alternative splicing</keyword>
<keyword id="KW-0175">Coiled coil</keyword>
<keyword id="KW-0963">Cytoplasm</keyword>
<keyword id="KW-1185">Reference proteome</keyword>
<keyword id="KW-0677">Repeat</keyword>
<keyword id="KW-0728">SH3 domain</keyword>